<accession>Q3V4X2</accession>
<comment type="function">
    <text evidence="1">Binds to 23S rRNA.</text>
</comment>
<comment type="subunit">
    <text evidence="1">Part of the 50S ribosomal subunit.</text>
</comment>
<comment type="subcellular location">
    <subcellularLocation>
        <location>Plastid</location>
        <location>Chloroplast</location>
    </subcellularLocation>
</comment>
<comment type="similarity">
    <text evidence="2">Belongs to the universal ribosomal protein uL23 family.</text>
</comment>
<dbReference type="EMBL" id="AJ879453">
    <property type="protein sequence ID" value="CAI53837.1"/>
    <property type="molecule type" value="Genomic_DNA"/>
</dbReference>
<dbReference type="EMBL" id="AJ879453">
    <property type="protein sequence ID" value="CAI53856.1"/>
    <property type="molecule type" value="Genomic_DNA"/>
</dbReference>
<dbReference type="SMR" id="Q3V4X2"/>
<dbReference type="GO" id="GO:0009507">
    <property type="term" value="C:chloroplast"/>
    <property type="evidence" value="ECO:0007669"/>
    <property type="project" value="UniProtKB-SubCell"/>
</dbReference>
<dbReference type="GO" id="GO:1990904">
    <property type="term" value="C:ribonucleoprotein complex"/>
    <property type="evidence" value="ECO:0007669"/>
    <property type="project" value="UniProtKB-KW"/>
</dbReference>
<dbReference type="GO" id="GO:0005840">
    <property type="term" value="C:ribosome"/>
    <property type="evidence" value="ECO:0007669"/>
    <property type="project" value="UniProtKB-KW"/>
</dbReference>
<dbReference type="GO" id="GO:0019843">
    <property type="term" value="F:rRNA binding"/>
    <property type="evidence" value="ECO:0007669"/>
    <property type="project" value="UniProtKB-UniRule"/>
</dbReference>
<dbReference type="GO" id="GO:0003735">
    <property type="term" value="F:structural constituent of ribosome"/>
    <property type="evidence" value="ECO:0007669"/>
    <property type="project" value="InterPro"/>
</dbReference>
<dbReference type="GO" id="GO:0006412">
    <property type="term" value="P:translation"/>
    <property type="evidence" value="ECO:0007669"/>
    <property type="project" value="UniProtKB-UniRule"/>
</dbReference>
<dbReference type="FunFam" id="3.30.70.330:FF:000002">
    <property type="entry name" value="50S ribosomal protein L23, chloroplastic"/>
    <property type="match status" value="1"/>
</dbReference>
<dbReference type="Gene3D" id="3.30.70.330">
    <property type="match status" value="1"/>
</dbReference>
<dbReference type="HAMAP" id="MF_01369_B">
    <property type="entry name" value="Ribosomal_uL23_B"/>
    <property type="match status" value="1"/>
</dbReference>
<dbReference type="InterPro" id="IPR012677">
    <property type="entry name" value="Nucleotide-bd_a/b_plait_sf"/>
</dbReference>
<dbReference type="InterPro" id="IPR013025">
    <property type="entry name" value="Ribosomal_uL23-like"/>
</dbReference>
<dbReference type="InterPro" id="IPR012678">
    <property type="entry name" value="Ribosomal_uL23/eL15/eS24_sf"/>
</dbReference>
<dbReference type="InterPro" id="IPR001014">
    <property type="entry name" value="Ribosomal_uL23_CS"/>
</dbReference>
<dbReference type="PANTHER" id="PTHR11620">
    <property type="entry name" value="60S RIBOSOMAL PROTEIN L23A"/>
    <property type="match status" value="1"/>
</dbReference>
<dbReference type="Pfam" id="PF00276">
    <property type="entry name" value="Ribosomal_L23"/>
    <property type="match status" value="1"/>
</dbReference>
<dbReference type="SUPFAM" id="SSF54189">
    <property type="entry name" value="Ribosomal proteins S24e, L23 and L15e"/>
    <property type="match status" value="1"/>
</dbReference>
<dbReference type="PROSITE" id="PS00050">
    <property type="entry name" value="RIBOSOMAL_L23"/>
    <property type="match status" value="1"/>
</dbReference>
<gene>
    <name type="primary">rpl23-A</name>
</gene>
<gene>
    <name type="primary">rpl23-B</name>
</gene>
<proteinExistence type="inferred from homology"/>
<organism>
    <name type="scientific">Acorus calamus</name>
    <name type="common">Sweet flag</name>
    <dbReference type="NCBI Taxonomy" id="4465"/>
    <lineage>
        <taxon>Eukaryota</taxon>
        <taxon>Viridiplantae</taxon>
        <taxon>Streptophyta</taxon>
        <taxon>Embryophyta</taxon>
        <taxon>Tracheophyta</taxon>
        <taxon>Spermatophyta</taxon>
        <taxon>Magnoliopsida</taxon>
        <taxon>Liliopsida</taxon>
        <taxon>Acoraceae</taxon>
        <taxon>Acorus</taxon>
    </lineage>
</organism>
<reference key="1">
    <citation type="journal article" date="2005" name="Mol. Biol. Evol.">
        <title>Analysis of Acorus calamus chloroplast genome and its phylogenetic implications.</title>
        <authorList>
            <person name="Goremykin V.V."/>
            <person name="Holland B."/>
            <person name="Hirsch-Ernst K.I."/>
            <person name="Hellwig F.H."/>
        </authorList>
    </citation>
    <scope>NUCLEOTIDE SEQUENCE [LARGE SCALE GENOMIC DNA]</scope>
</reference>
<name>RK23_ACOCL</name>
<evidence type="ECO:0000250" key="1"/>
<evidence type="ECO:0000305" key="2"/>
<feature type="chain" id="PRO_0000272885" description="Large ribosomal subunit protein uL23cz/uL23cy">
    <location>
        <begin position="1"/>
        <end position="93"/>
    </location>
</feature>
<protein>
    <recommendedName>
        <fullName evidence="2">Large ribosomal subunit protein uL23cz/uL23cy</fullName>
    </recommendedName>
    <alternativeName>
        <fullName>50S ribosomal protein L23, chloroplastic</fullName>
    </alternativeName>
</protein>
<sequence length="93" mass="10655">MDGIKYAVFTEKSIRLLGNNQYTSNVESGSTRTEIKHWVELFFGVKVIAMNSHRLPGKGRRVGPIKGHTMHYRRMIITLQPGYSIPPLIEKRT</sequence>
<keyword id="KW-0150">Chloroplast</keyword>
<keyword id="KW-0934">Plastid</keyword>
<keyword id="KW-0687">Ribonucleoprotein</keyword>
<keyword id="KW-0689">Ribosomal protein</keyword>
<keyword id="KW-0694">RNA-binding</keyword>
<keyword id="KW-0699">rRNA-binding</keyword>
<geneLocation type="chloroplast"/>